<reference key="1">
    <citation type="journal article" date="2006" name="Ann. Bot.">
        <title>Proteome profiling of Populus euphratica Oliv. upon heat stress.</title>
        <authorList>
            <person name="Ferreira S."/>
            <person name="Hjernoe K."/>
            <person name="Larsen M."/>
            <person name="Wingsle G."/>
            <person name="Larsen P."/>
            <person name="Fey S."/>
            <person name="Roepstorff P."/>
            <person name="Pais M.S."/>
        </authorList>
    </citation>
    <scope>PROTEIN SEQUENCE</scope>
    <source>
        <tissue>Leaf</tissue>
    </source>
</reference>
<sequence>FLSVTEPSLLGDGGDLEIRVFISDDFDGELFPRGVVDSDDLPLNVSR</sequence>
<organism>
    <name type="scientific">Populus euphratica</name>
    <name type="common">Euphrates poplar</name>
    <dbReference type="NCBI Taxonomy" id="75702"/>
    <lineage>
        <taxon>Eukaryota</taxon>
        <taxon>Viridiplantae</taxon>
        <taxon>Streptophyta</taxon>
        <taxon>Embryophyta</taxon>
        <taxon>Tracheophyta</taxon>
        <taxon>Spermatophyta</taxon>
        <taxon>Magnoliopsida</taxon>
        <taxon>eudicotyledons</taxon>
        <taxon>Gunneridae</taxon>
        <taxon>Pentapetalae</taxon>
        <taxon>rosids</taxon>
        <taxon>fabids</taxon>
        <taxon>Malpighiales</taxon>
        <taxon>Salicaceae</taxon>
        <taxon>Saliceae</taxon>
        <taxon>Populus</taxon>
    </lineage>
</organism>
<dbReference type="SMR" id="P84577"/>
<dbReference type="Proteomes" id="UP000694918">
    <property type="component" value="Unplaced"/>
</dbReference>
<dbReference type="GO" id="GO:0005737">
    <property type="term" value="C:cytoplasm"/>
    <property type="evidence" value="ECO:0007669"/>
    <property type="project" value="UniProtKB-SubCell"/>
</dbReference>
<dbReference type="GO" id="GO:0005524">
    <property type="term" value="F:ATP binding"/>
    <property type="evidence" value="ECO:0007669"/>
    <property type="project" value="UniProtKB-KW"/>
</dbReference>
<dbReference type="GO" id="GO:0016887">
    <property type="term" value="F:ATP hydrolysis activity"/>
    <property type="evidence" value="ECO:0007669"/>
    <property type="project" value="InterPro"/>
</dbReference>
<dbReference type="GO" id="GO:0140662">
    <property type="term" value="F:ATP-dependent protein folding chaperone"/>
    <property type="evidence" value="ECO:0007669"/>
    <property type="project" value="InterPro"/>
</dbReference>
<dbReference type="GO" id="GO:0051082">
    <property type="term" value="F:unfolded protein binding"/>
    <property type="evidence" value="ECO:0007669"/>
    <property type="project" value="InterPro"/>
</dbReference>
<dbReference type="Gene3D" id="3.30.230.80">
    <property type="match status" value="1"/>
</dbReference>
<dbReference type="InterPro" id="IPR001404">
    <property type="entry name" value="Hsp90_fam"/>
</dbReference>
<dbReference type="InterPro" id="IPR020568">
    <property type="entry name" value="Ribosomal_Su5_D2-typ_SF"/>
</dbReference>
<dbReference type="Pfam" id="PF00183">
    <property type="entry name" value="HSP90"/>
    <property type="match status" value="1"/>
</dbReference>
<dbReference type="SUPFAM" id="SSF54211">
    <property type="entry name" value="Ribosomal protein S5 domain 2-like"/>
    <property type="match status" value="1"/>
</dbReference>
<name>HSP90_POPEU</name>
<feature type="chain" id="PRO_0000062952" description="Putative heat shock protein HSP90">
    <location>
        <begin position="1" status="less than"/>
        <end position="47" status="greater than"/>
    </location>
</feature>
<feature type="binding site" evidence="1">
    <location>
        <position position="47"/>
    </location>
    <ligand>
        <name>ATP</name>
        <dbReference type="ChEBI" id="CHEBI:30616"/>
    </ligand>
</feature>
<feature type="non-consecutive residues" evidence="4">
    <location>
        <begin position="19"/>
        <end position="20"/>
    </location>
</feature>
<feature type="non-consecutive residues" evidence="4">
    <location>
        <begin position="33"/>
        <end position="34"/>
    </location>
</feature>
<feature type="non-terminal residue">
    <location>
        <position position="1"/>
    </location>
</feature>
<feature type="non-terminal residue">
    <location>
        <position position="47"/>
    </location>
</feature>
<keyword id="KW-0067">ATP-binding</keyword>
<keyword id="KW-0143">Chaperone</keyword>
<keyword id="KW-0963">Cytoplasm</keyword>
<keyword id="KW-0903">Direct protein sequencing</keyword>
<keyword id="KW-0547">Nucleotide-binding</keyword>
<keyword id="KW-1185">Reference proteome</keyword>
<keyword id="KW-0346">Stress response</keyword>
<proteinExistence type="evidence at protein level"/>
<protein>
    <recommendedName>
        <fullName>Putative heat shock protein HSP90</fullName>
    </recommendedName>
</protein>
<comment type="function">
    <text evidence="1">Putative molecular chaperone that may promote the maturation, structural maintenance and proper regulation of specific target proteins.</text>
</comment>
<comment type="subunit">
    <text evidence="2">Homodimer.</text>
</comment>
<comment type="subcellular location">
    <subcellularLocation>
        <location evidence="1">Cytoplasm</location>
    </subcellularLocation>
</comment>
<comment type="similarity">
    <text evidence="3">Belongs to the heat shock protein 90 family.</text>
</comment>
<evidence type="ECO:0000250" key="1"/>
<evidence type="ECO:0000250" key="2">
    <source>
        <dbReference type="UniProtKB" id="P08238"/>
    </source>
</evidence>
<evidence type="ECO:0000255" key="3"/>
<evidence type="ECO:0000305" key="4"/>
<accession>P84577</accession>